<keyword id="KW-0176">Collagen</keyword>
<keyword id="KW-0325">Glycoprotein</keyword>
<keyword id="KW-0372">Hormone</keyword>
<keyword id="KW-0379">Hydroxylation</keyword>
<keyword id="KW-1267">Proteomics identification</keyword>
<keyword id="KW-1185">Reference proteome</keyword>
<keyword id="KW-0677">Repeat</keyword>
<keyword id="KW-0964">Secreted</keyword>
<keyword id="KW-0732">Signal</keyword>
<accession>P0C862</accession>
<accession>A2A3T6</accession>
<accession>Q0VGC5</accession>
<accession>Q5VX65</accession>
<accession>Q5VX66</accession>
<accession>Q8IUU4</accession>
<proteinExistence type="evidence at protein level"/>
<sequence>MRIWWLLLAIEICTGNINSQDTCRQGHPGIPGNPGHNGLPGRDGRDGAKGDKGDAGEPGRPGSPGKDGTSGEKGERGADGKVEAKGIKGDQGSRGSPGKHGPKGLAGPMGEKGLRGETGPQGQKGNKGDVGPTGPEGPRGNIGPLGPTGLPGPMGPIGKPGPKGEAGPTGPQGEPGVRGIRGWKGDRGEKGKIGETLVLPKSAFTVGLTVLSKFPSSDMPIKFDKILYNEFNHYDTAAGKFTCHIAGVYYFTYHITVFSRNVQVSLVKNGVKILHTKDAYMSSEDQASGGIVLQLKLGDEVWLQVTGGERFNGLFADEDDDTTFTGFLLFSSP</sequence>
<name>C1T9A_HUMAN</name>
<evidence type="ECO:0000250" key="1"/>
<evidence type="ECO:0000250" key="2">
    <source>
        <dbReference type="UniProtKB" id="Q4ZJN1"/>
    </source>
</evidence>
<evidence type="ECO:0000255" key="3"/>
<evidence type="ECO:0000255" key="4">
    <source>
        <dbReference type="PROSITE-ProRule" id="PRU00368"/>
    </source>
</evidence>
<evidence type="ECO:0000256" key="5">
    <source>
        <dbReference type="SAM" id="MobiDB-lite"/>
    </source>
</evidence>
<evidence type="ECO:0000269" key="6">
    <source>
    </source>
</evidence>
<evidence type="ECO:0000269" key="7">
    <source>
    </source>
</evidence>
<evidence type="ECO:0000269" key="8">
    <source>
    </source>
</evidence>
<evidence type="ECO:0000269" key="9">
    <source>
    </source>
</evidence>
<comment type="function">
    <text evidence="2">Probable adipokine. Activates AMPK, AKT, and p44/42 MAPK signaling pathways.</text>
</comment>
<comment type="subunit">
    <text evidence="1 9">Multimers (predominantly trimers). Interacts with ADIPOQ via the C1q domain to form a heterotrimeric complex (By similarity). Interacts with CTRP9B. Forms heterotrimers and heterooligomeric complexes with CTRP9B.</text>
</comment>
<comment type="interaction">
    <interactant intactId="EBI-5654640">
        <id>P0C862</id>
    </interactant>
    <interactant intactId="EBI-5654640">
        <id>P0C862</id>
        <label>C1QTNF9</label>
    </interactant>
    <organismsDiffer>false</organismsDiffer>
    <experiments>2</experiments>
</comment>
<comment type="interaction">
    <interactant intactId="EBI-5654640">
        <id>P0C862</id>
    </interactant>
    <interactant intactId="EBI-10828035">
        <id>B2RNN3</id>
        <label>C1QTNF9B</label>
    </interactant>
    <organismsDiffer>false</organismsDiffer>
    <experiments>5</experiments>
</comment>
<comment type="subcellular location">
    <subcellularLocation>
        <location evidence="1">Secreted</location>
    </subcellularLocation>
</comment>
<comment type="tissue specificity">
    <text evidence="9">Expressed predominantly in adipose tissue.</text>
</comment>
<dbReference type="EMBL" id="AY358145">
    <property type="protein sequence ID" value="AAQ88512.1"/>
    <property type="molecule type" value="mRNA"/>
</dbReference>
<dbReference type="EMBL" id="AL359736">
    <property type="status" value="NOT_ANNOTATED_CDS"/>
    <property type="molecule type" value="Genomic_DNA"/>
</dbReference>
<dbReference type="EMBL" id="BC040438">
    <property type="protein sequence ID" value="AAH40438.1"/>
    <property type="molecule type" value="mRNA"/>
</dbReference>
<dbReference type="CCDS" id="CCDS9306.1"/>
<dbReference type="RefSeq" id="NP_001290066.1">
    <property type="nucleotide sequence ID" value="NM_001303137.2"/>
</dbReference>
<dbReference type="RefSeq" id="NP_001290067.1">
    <property type="nucleotide sequence ID" value="NM_001303138.2"/>
</dbReference>
<dbReference type="RefSeq" id="NP_848635.2">
    <property type="nucleotide sequence ID" value="NM_178540.5"/>
</dbReference>
<dbReference type="SMR" id="P0C862"/>
<dbReference type="BioGRID" id="130809">
    <property type="interactions" value="36"/>
</dbReference>
<dbReference type="FunCoup" id="P0C862">
    <property type="interactions" value="16"/>
</dbReference>
<dbReference type="IntAct" id="P0C862">
    <property type="interactions" value="36"/>
</dbReference>
<dbReference type="STRING" id="9606.ENSP00000371503"/>
<dbReference type="TCDB" id="8.A.94.1.2">
    <property type="family name" value="the adiponectin (adiponectin) family"/>
</dbReference>
<dbReference type="GlyCosmos" id="P0C862">
    <property type="glycosylation" value="2 sites, No reported glycans"/>
</dbReference>
<dbReference type="GlyGen" id="P0C862">
    <property type="glycosylation" value="4 sites"/>
</dbReference>
<dbReference type="iPTMnet" id="P0C862"/>
<dbReference type="PhosphoSitePlus" id="P0C862"/>
<dbReference type="BioMuta" id="C1QTNF9"/>
<dbReference type="DMDM" id="205686199"/>
<dbReference type="jPOST" id="P0C862"/>
<dbReference type="MassIVE" id="P0C862"/>
<dbReference type="PaxDb" id="9606-ENSP00000371503"/>
<dbReference type="PeptideAtlas" id="P0C862"/>
<dbReference type="ProteomicsDB" id="52399"/>
<dbReference type="Antibodypedia" id="34999">
    <property type="antibodies" value="77 antibodies from 17 providers"/>
</dbReference>
<dbReference type="DNASU" id="338872"/>
<dbReference type="Ensembl" id="ENST00000332018.5">
    <property type="protein sequence ID" value="ENSP00000333737.4"/>
    <property type="gene ID" value="ENSG00000240654.6"/>
</dbReference>
<dbReference type="Ensembl" id="ENST00000382071.6">
    <property type="protein sequence ID" value="ENSP00000371503.2"/>
    <property type="gene ID" value="ENSG00000240654.6"/>
</dbReference>
<dbReference type="GeneID" id="338872"/>
<dbReference type="KEGG" id="hsa:338872"/>
<dbReference type="MANE-Select" id="ENST00000332018.5">
    <property type="protein sequence ID" value="ENSP00000333737.4"/>
    <property type="RefSeq nucleotide sequence ID" value="NM_178540.5"/>
    <property type="RefSeq protein sequence ID" value="NP_848635.2"/>
</dbReference>
<dbReference type="UCSC" id="uc001upj.4">
    <property type="organism name" value="human"/>
</dbReference>
<dbReference type="AGR" id="HGNC:28732"/>
<dbReference type="CTD" id="338872"/>
<dbReference type="DisGeNET" id="338872"/>
<dbReference type="GeneCards" id="C1QTNF9"/>
<dbReference type="HGNC" id="HGNC:28732">
    <property type="gene designation" value="C1QTNF9"/>
</dbReference>
<dbReference type="HPA" id="ENSG00000240654">
    <property type="expression patterns" value="Tissue enhanced (skeletal)"/>
</dbReference>
<dbReference type="MIM" id="614285">
    <property type="type" value="gene"/>
</dbReference>
<dbReference type="neXtProt" id="NX_P0C862"/>
<dbReference type="OpenTargets" id="ENSG00000240654"/>
<dbReference type="PharmGKB" id="PA145008937"/>
<dbReference type="VEuPathDB" id="HostDB:ENSG00000240654"/>
<dbReference type="eggNOG" id="ENOG502QVBU">
    <property type="taxonomic scope" value="Eukaryota"/>
</dbReference>
<dbReference type="GeneTree" id="ENSGT00940000154936"/>
<dbReference type="HOGENOM" id="CLU_001074_0_0_1"/>
<dbReference type="InParanoid" id="P0C862"/>
<dbReference type="OMA" id="HTKDSYM"/>
<dbReference type="OrthoDB" id="9533734at2759"/>
<dbReference type="PAN-GO" id="P0C862">
    <property type="GO annotations" value="0 GO annotations based on evolutionary models"/>
</dbReference>
<dbReference type="PhylomeDB" id="P0C862"/>
<dbReference type="TreeFam" id="TF334029"/>
<dbReference type="PathwayCommons" id="P0C862"/>
<dbReference type="SignaLink" id="P0C862"/>
<dbReference type="BioGRID-ORCS" id="338872">
    <property type="hits" value="13 hits in 1045 CRISPR screens"/>
</dbReference>
<dbReference type="ChiTaRS" id="C1QTNF9">
    <property type="organism name" value="human"/>
</dbReference>
<dbReference type="GenomeRNAi" id="338872"/>
<dbReference type="Pharos" id="P0C862">
    <property type="development level" value="Tbio"/>
</dbReference>
<dbReference type="PRO" id="PR:P0C862"/>
<dbReference type="Proteomes" id="UP000005640">
    <property type="component" value="Chromosome 13"/>
</dbReference>
<dbReference type="RNAct" id="P0C862">
    <property type="molecule type" value="protein"/>
</dbReference>
<dbReference type="Bgee" id="ENSG00000240654">
    <property type="expression patterns" value="Expressed in male germ line stem cell (sensu Vertebrata) in testis and 84 other cell types or tissues"/>
</dbReference>
<dbReference type="ExpressionAtlas" id="P0C862">
    <property type="expression patterns" value="baseline and differential"/>
</dbReference>
<dbReference type="GO" id="GO:0005581">
    <property type="term" value="C:collagen trimer"/>
    <property type="evidence" value="ECO:0007669"/>
    <property type="project" value="UniProtKB-KW"/>
</dbReference>
<dbReference type="GO" id="GO:0005576">
    <property type="term" value="C:extracellular region"/>
    <property type="evidence" value="ECO:0007669"/>
    <property type="project" value="UniProtKB-SubCell"/>
</dbReference>
<dbReference type="GO" id="GO:0005179">
    <property type="term" value="F:hormone activity"/>
    <property type="evidence" value="ECO:0007669"/>
    <property type="project" value="UniProtKB-KW"/>
</dbReference>
<dbReference type="GO" id="GO:0042802">
    <property type="term" value="F:identical protein binding"/>
    <property type="evidence" value="ECO:0000353"/>
    <property type="project" value="IntAct"/>
</dbReference>
<dbReference type="FunFam" id="2.60.120.40:FF:000001">
    <property type="entry name" value="Complement C1q B chain"/>
    <property type="match status" value="1"/>
</dbReference>
<dbReference type="Gene3D" id="2.60.120.40">
    <property type="match status" value="1"/>
</dbReference>
<dbReference type="InterPro" id="IPR001073">
    <property type="entry name" value="C1q_dom"/>
</dbReference>
<dbReference type="InterPro" id="IPR008160">
    <property type="entry name" value="Collagen"/>
</dbReference>
<dbReference type="InterPro" id="IPR050392">
    <property type="entry name" value="Collagen/C1q_domain"/>
</dbReference>
<dbReference type="InterPro" id="IPR008983">
    <property type="entry name" value="Tumour_necrosis_fac-like_dom"/>
</dbReference>
<dbReference type="PANTHER" id="PTHR15427:SF21">
    <property type="entry name" value="COMPLEMENT C1Q AND TUMOR NECROSIS FACTOR-RELATED PROTEIN 9A"/>
    <property type="match status" value="1"/>
</dbReference>
<dbReference type="PANTHER" id="PTHR15427">
    <property type="entry name" value="EMILIN ELASTIN MICROFIBRIL INTERFACE-LOCATED PROTEIN ELASTIN MICROFIBRIL INTERFACER"/>
    <property type="match status" value="1"/>
</dbReference>
<dbReference type="Pfam" id="PF00386">
    <property type="entry name" value="C1q"/>
    <property type="match status" value="1"/>
</dbReference>
<dbReference type="Pfam" id="PF01391">
    <property type="entry name" value="Collagen"/>
    <property type="match status" value="3"/>
</dbReference>
<dbReference type="PRINTS" id="PR00007">
    <property type="entry name" value="COMPLEMNTC1Q"/>
</dbReference>
<dbReference type="SMART" id="SM00110">
    <property type="entry name" value="C1Q"/>
    <property type="match status" value="1"/>
</dbReference>
<dbReference type="SUPFAM" id="SSF49842">
    <property type="entry name" value="TNF-like"/>
    <property type="match status" value="1"/>
</dbReference>
<dbReference type="PROSITE" id="PS50871">
    <property type="entry name" value="C1Q"/>
    <property type="match status" value="1"/>
</dbReference>
<feature type="signal peptide" evidence="3">
    <location>
        <begin position="1"/>
        <end position="19"/>
    </location>
</feature>
<feature type="chain" id="PRO_0000291751" description="Complement C1q and tumor necrosis factor-related protein 9A">
    <location>
        <begin position="20"/>
        <end position="333"/>
    </location>
</feature>
<feature type="domain" description="Collagen-like 1">
    <location>
        <begin position="24"/>
        <end position="82"/>
    </location>
</feature>
<feature type="domain" description="Collagen-like 2">
    <location>
        <begin position="95"/>
        <end position="154"/>
    </location>
</feature>
<feature type="domain" description="Collagen-like 3">
    <location>
        <begin position="155"/>
        <end position="191"/>
    </location>
</feature>
<feature type="domain" description="C1q" evidence="4">
    <location>
        <begin position="197"/>
        <end position="333"/>
    </location>
</feature>
<feature type="region of interest" description="Disordered" evidence="5">
    <location>
        <begin position="24"/>
        <end position="188"/>
    </location>
</feature>
<feature type="compositionally biased region" description="Low complexity" evidence="5">
    <location>
        <begin position="26"/>
        <end position="40"/>
    </location>
</feature>
<feature type="compositionally biased region" description="Basic and acidic residues" evidence="5">
    <location>
        <begin position="42"/>
        <end position="57"/>
    </location>
</feature>
<feature type="compositionally biased region" description="Basic and acidic residues" evidence="5">
    <location>
        <begin position="69"/>
        <end position="88"/>
    </location>
</feature>
<feature type="modified residue" description="4-hydroxyproline" evidence="1">
    <location>
        <position position="31"/>
    </location>
</feature>
<feature type="modified residue" description="4-hydroxyproline" evidence="1">
    <location>
        <position position="34"/>
    </location>
</feature>
<feature type="modified residue" description="4-hydroxyproline" evidence="1">
    <location>
        <position position="40"/>
    </location>
</feature>
<feature type="modified residue" description="4-hydroxyproline" evidence="1">
    <location>
        <position position="58"/>
    </location>
</feature>
<feature type="modified residue" description="4-hydroxyproline" evidence="1">
    <location>
        <position position="61"/>
    </location>
</feature>
<feature type="modified residue" description="4-hydroxyproline" evidence="1">
    <location>
        <position position="64"/>
    </location>
</feature>
<feature type="modified residue" description="5-hydroxylysine" evidence="1">
    <location>
        <position position="73"/>
    </location>
</feature>
<feature type="modified residue" description="5-hydroxylysine" evidence="1">
    <location>
        <position position="127"/>
    </location>
</feature>
<feature type="modified residue" description="4-hydroxyproline" evidence="1">
    <location>
        <position position="151"/>
    </location>
</feature>
<feature type="modified residue" description="4-hydroxyproline" evidence="1">
    <location>
        <position position="160"/>
    </location>
</feature>
<feature type="modified residue" description="4-hydroxyproline" evidence="1">
    <location>
        <position position="175"/>
    </location>
</feature>
<feature type="glycosylation site" description="O-linked (Gal...) hydroxylysine" evidence="1">
    <location>
        <position position="73"/>
    </location>
</feature>
<feature type="glycosylation site" description="O-linked (Gal...) hydroxylysine" evidence="1">
    <location>
        <position position="127"/>
    </location>
</feature>
<feature type="sequence variant" id="VAR_059148" description="In dbSNP:rs1974332.">
    <original>L</original>
    <variation>F</variation>
    <location>
        <position position="6"/>
    </location>
</feature>
<feature type="sequence variant" id="VAR_032840" description="In dbSNP:rs3751357." evidence="6 7 8">
    <original>M</original>
    <variation>V</variation>
    <location>
        <position position="219"/>
    </location>
</feature>
<feature type="sequence variant" id="VAR_032841" description="In dbSNP:rs4589405." evidence="7">
    <original>V</original>
    <variation>M</variation>
    <location>
        <position position="301"/>
    </location>
</feature>
<reference key="1">
    <citation type="journal article" date="2009" name="Biochem. Biophys. Res. Commun.">
        <title>CTRP8 and CTRP9B are novel proteins that hetero-oligomerize with C1q/TNF family members.</title>
        <authorList>
            <person name="Peterson J.M."/>
            <person name="Wei Z."/>
            <person name="Wong G.W."/>
        </authorList>
    </citation>
    <scope>NUCLEOTIDE SEQUENCE [MRNA]</scope>
    <scope>SUBCELLULAR LOCATION</scope>
    <scope>INTERACTION WITH C1QL1</scope>
    <scope>TISSUE SPECIFICITY</scope>
    <source>
        <tissue>Hippocampus</tissue>
    </source>
</reference>
<reference key="2">
    <citation type="journal article" date="2003" name="Genome Res.">
        <title>The secreted protein discovery initiative (SPDI), a large-scale effort to identify novel human secreted and transmembrane proteins: a bioinformatics assessment.</title>
        <authorList>
            <person name="Clark H.F."/>
            <person name="Gurney A.L."/>
            <person name="Abaya E."/>
            <person name="Baker K."/>
            <person name="Baldwin D.T."/>
            <person name="Brush J."/>
            <person name="Chen J."/>
            <person name="Chow B."/>
            <person name="Chui C."/>
            <person name="Crowley C."/>
            <person name="Currell B."/>
            <person name="Deuel B."/>
            <person name="Dowd P."/>
            <person name="Eaton D."/>
            <person name="Foster J.S."/>
            <person name="Grimaldi C."/>
            <person name="Gu Q."/>
            <person name="Hass P.E."/>
            <person name="Heldens S."/>
            <person name="Huang A."/>
            <person name="Kim H.S."/>
            <person name="Klimowski L."/>
            <person name="Jin Y."/>
            <person name="Johnson S."/>
            <person name="Lee J."/>
            <person name="Lewis L."/>
            <person name="Liao D."/>
            <person name="Mark M.R."/>
            <person name="Robbie E."/>
            <person name="Sanchez C."/>
            <person name="Schoenfeld J."/>
            <person name="Seshagiri S."/>
            <person name="Simmons L."/>
            <person name="Singh J."/>
            <person name="Smith V."/>
            <person name="Stinson J."/>
            <person name="Vagts A."/>
            <person name="Vandlen R.L."/>
            <person name="Watanabe C."/>
            <person name="Wieand D."/>
            <person name="Woods K."/>
            <person name="Xie M.-H."/>
            <person name="Yansura D.G."/>
            <person name="Yi S."/>
            <person name="Yu G."/>
            <person name="Yuan J."/>
            <person name="Zhang M."/>
            <person name="Zhang Z."/>
            <person name="Goddard A.D."/>
            <person name="Wood W.I."/>
            <person name="Godowski P.J."/>
            <person name="Gray A.M."/>
        </authorList>
    </citation>
    <scope>NUCLEOTIDE SEQUENCE [LARGE SCALE MRNA]</scope>
    <scope>VARIANT VAL-219</scope>
</reference>
<reference key="3">
    <citation type="journal article" date="2004" name="Nature">
        <title>The DNA sequence and analysis of human chromosome 13.</title>
        <authorList>
            <person name="Dunham A."/>
            <person name="Matthews L.H."/>
            <person name="Burton J."/>
            <person name="Ashurst J.L."/>
            <person name="Howe K.L."/>
            <person name="Ashcroft K.J."/>
            <person name="Beare D.M."/>
            <person name="Burford D.C."/>
            <person name="Hunt S.E."/>
            <person name="Griffiths-Jones S."/>
            <person name="Jones M.C."/>
            <person name="Keenan S.J."/>
            <person name="Oliver K."/>
            <person name="Scott C.E."/>
            <person name="Ainscough R."/>
            <person name="Almeida J.P."/>
            <person name="Ambrose K.D."/>
            <person name="Andrews D.T."/>
            <person name="Ashwell R.I.S."/>
            <person name="Babbage A.K."/>
            <person name="Bagguley C.L."/>
            <person name="Bailey J."/>
            <person name="Bannerjee R."/>
            <person name="Barlow K.F."/>
            <person name="Bates K."/>
            <person name="Beasley H."/>
            <person name="Bird C.P."/>
            <person name="Bray-Allen S."/>
            <person name="Brown A.J."/>
            <person name="Brown J.Y."/>
            <person name="Burrill W."/>
            <person name="Carder C."/>
            <person name="Carter N.P."/>
            <person name="Chapman J.C."/>
            <person name="Clamp M.E."/>
            <person name="Clark S.Y."/>
            <person name="Clarke G."/>
            <person name="Clee C.M."/>
            <person name="Clegg S.C."/>
            <person name="Cobley V."/>
            <person name="Collins J.E."/>
            <person name="Corby N."/>
            <person name="Coville G.J."/>
            <person name="Deloukas P."/>
            <person name="Dhami P."/>
            <person name="Dunham I."/>
            <person name="Dunn M."/>
            <person name="Earthrowl M.E."/>
            <person name="Ellington A.G."/>
            <person name="Faulkner L."/>
            <person name="Frankish A.G."/>
            <person name="Frankland J."/>
            <person name="French L."/>
            <person name="Garner P."/>
            <person name="Garnett J."/>
            <person name="Gilbert J.G.R."/>
            <person name="Gilson C.J."/>
            <person name="Ghori J."/>
            <person name="Grafham D.V."/>
            <person name="Gribble S.M."/>
            <person name="Griffiths C."/>
            <person name="Hall R.E."/>
            <person name="Hammond S."/>
            <person name="Harley J.L."/>
            <person name="Hart E.A."/>
            <person name="Heath P.D."/>
            <person name="Howden P.J."/>
            <person name="Huckle E.J."/>
            <person name="Hunt P.J."/>
            <person name="Hunt A.R."/>
            <person name="Johnson C."/>
            <person name="Johnson D."/>
            <person name="Kay M."/>
            <person name="Kimberley A.M."/>
            <person name="King A."/>
            <person name="Laird G.K."/>
            <person name="Langford C.J."/>
            <person name="Lawlor S."/>
            <person name="Leongamornlert D.A."/>
            <person name="Lloyd D.M."/>
            <person name="Lloyd C."/>
            <person name="Loveland J.E."/>
            <person name="Lovell J."/>
            <person name="Martin S."/>
            <person name="Mashreghi-Mohammadi M."/>
            <person name="McLaren S.J."/>
            <person name="McMurray A."/>
            <person name="Milne S."/>
            <person name="Moore M.J.F."/>
            <person name="Nickerson T."/>
            <person name="Palmer S.A."/>
            <person name="Pearce A.V."/>
            <person name="Peck A.I."/>
            <person name="Pelan S."/>
            <person name="Phillimore B."/>
            <person name="Porter K.M."/>
            <person name="Rice C.M."/>
            <person name="Searle S."/>
            <person name="Sehra H.K."/>
            <person name="Shownkeen R."/>
            <person name="Skuce C.D."/>
            <person name="Smith M."/>
            <person name="Steward C.A."/>
            <person name="Sycamore N."/>
            <person name="Tester J."/>
            <person name="Thomas D.W."/>
            <person name="Tracey A."/>
            <person name="Tromans A."/>
            <person name="Tubby B."/>
            <person name="Wall M."/>
            <person name="Wallis J.M."/>
            <person name="West A.P."/>
            <person name="Whitehead S.L."/>
            <person name="Willey D.L."/>
            <person name="Wilming L."/>
            <person name="Wray P.W."/>
            <person name="Wright M.W."/>
            <person name="Young L."/>
            <person name="Coulson A."/>
            <person name="Durbin R.M."/>
            <person name="Hubbard T."/>
            <person name="Sulston J.E."/>
            <person name="Beck S."/>
            <person name="Bentley D.R."/>
            <person name="Rogers J."/>
            <person name="Ross M.T."/>
        </authorList>
    </citation>
    <scope>NUCLEOTIDE SEQUENCE [LARGE SCALE GENOMIC DNA]</scope>
    <scope>VARIANTS VAL-219 AND MET-301</scope>
</reference>
<reference key="4">
    <citation type="journal article" date="2004" name="Genome Res.">
        <title>The status, quality, and expansion of the NIH full-length cDNA project: the Mammalian Gene Collection (MGC).</title>
        <authorList>
            <consortium name="The MGC Project Team"/>
        </authorList>
    </citation>
    <scope>NUCLEOTIDE SEQUENCE [LARGE SCALE MRNA]</scope>
    <scope>VARIANT VAL-219</scope>
</reference>
<protein>
    <recommendedName>
        <fullName>Complement C1q and tumor necrosis factor-related protein 9A</fullName>
    </recommendedName>
    <alternativeName>
        <fullName>Complement C1q and tumor necrosis factor-related protein 9</fullName>
    </alternativeName>
</protein>
<organism>
    <name type="scientific">Homo sapiens</name>
    <name type="common">Human</name>
    <dbReference type="NCBI Taxonomy" id="9606"/>
    <lineage>
        <taxon>Eukaryota</taxon>
        <taxon>Metazoa</taxon>
        <taxon>Chordata</taxon>
        <taxon>Craniata</taxon>
        <taxon>Vertebrata</taxon>
        <taxon>Euteleostomi</taxon>
        <taxon>Mammalia</taxon>
        <taxon>Eutheria</taxon>
        <taxon>Euarchontoglires</taxon>
        <taxon>Primates</taxon>
        <taxon>Haplorrhini</taxon>
        <taxon>Catarrhini</taxon>
        <taxon>Hominidae</taxon>
        <taxon>Homo</taxon>
    </lineage>
</organism>
<gene>
    <name type="primary">C1QTNF9</name>
    <name type="synonym">C1QTNF9A</name>
    <name type="ORF">UNQ6503/PRO21380</name>
</gene>